<proteinExistence type="inferred from homology"/>
<reference key="1">
    <citation type="journal article" date="2010" name="Genome Biol.">
        <title>Structure and dynamics of the pan-genome of Streptococcus pneumoniae and closely related species.</title>
        <authorList>
            <person name="Donati C."/>
            <person name="Hiller N.L."/>
            <person name="Tettelin H."/>
            <person name="Muzzi A."/>
            <person name="Croucher N.J."/>
            <person name="Angiuoli S.V."/>
            <person name="Oggioni M."/>
            <person name="Dunning Hotopp J.C."/>
            <person name="Hu F.Z."/>
            <person name="Riley D.R."/>
            <person name="Covacci A."/>
            <person name="Mitchell T.J."/>
            <person name="Bentley S.D."/>
            <person name="Kilian M."/>
            <person name="Ehrlich G.D."/>
            <person name="Rappuoli R."/>
            <person name="Moxon E.R."/>
            <person name="Masignani V."/>
        </authorList>
    </citation>
    <scope>NUCLEOTIDE SEQUENCE [LARGE SCALE GENOMIC DNA]</scope>
    <source>
        <strain>JJA</strain>
    </source>
</reference>
<organism>
    <name type="scientific">Streptococcus pneumoniae (strain JJA)</name>
    <dbReference type="NCBI Taxonomy" id="488222"/>
    <lineage>
        <taxon>Bacteria</taxon>
        <taxon>Bacillati</taxon>
        <taxon>Bacillota</taxon>
        <taxon>Bacilli</taxon>
        <taxon>Lactobacillales</taxon>
        <taxon>Streptococcaceae</taxon>
        <taxon>Streptococcus</taxon>
    </lineage>
</organism>
<accession>C1CBZ5</accession>
<comment type="similarity">
    <text evidence="1">Belongs to the UPF0473 family.</text>
</comment>
<dbReference type="EMBL" id="CP000919">
    <property type="protein sequence ID" value="ACO18193.1"/>
    <property type="molecule type" value="Genomic_DNA"/>
</dbReference>
<dbReference type="RefSeq" id="WP_000017620.1">
    <property type="nucleotide sequence ID" value="NC_012466.1"/>
</dbReference>
<dbReference type="KEGG" id="sjj:SPJ_0208"/>
<dbReference type="HOGENOM" id="CLU_146610_2_1_9"/>
<dbReference type="Proteomes" id="UP000002206">
    <property type="component" value="Chromosome"/>
</dbReference>
<dbReference type="HAMAP" id="MF_01448">
    <property type="entry name" value="UPF0473"/>
    <property type="match status" value="1"/>
</dbReference>
<dbReference type="InterPro" id="IPR009711">
    <property type="entry name" value="UPF0473"/>
</dbReference>
<dbReference type="NCBIfam" id="NF010215">
    <property type="entry name" value="PRK13678.1-2"/>
    <property type="match status" value="1"/>
</dbReference>
<dbReference type="NCBIfam" id="NF010217">
    <property type="entry name" value="PRK13678.1-4"/>
    <property type="match status" value="1"/>
</dbReference>
<dbReference type="PANTHER" id="PTHR40066">
    <property type="entry name" value="UPF0473 PROTEIN CBO2561/CLC_2432"/>
    <property type="match status" value="1"/>
</dbReference>
<dbReference type="PANTHER" id="PTHR40066:SF1">
    <property type="entry name" value="UPF0473 PROTEIN CBO2561_CLC_2432"/>
    <property type="match status" value="1"/>
</dbReference>
<dbReference type="Pfam" id="PF06949">
    <property type="entry name" value="DUF1292"/>
    <property type="match status" value="1"/>
</dbReference>
<name>Y208_STRZJ</name>
<sequence>MSHDHNHDHEERELITLVDEQGNETLFEILLTIDGKEEFGKNYVLLVPVNAEEDEDGQVEIQAYSFIENEDGTEGELQPIPEDSEDEWNMIEEVFNSFMEE</sequence>
<feature type="chain" id="PRO_1000185001" description="UPF0473 protein SPJ_0208">
    <location>
        <begin position="1"/>
        <end position="101"/>
    </location>
</feature>
<evidence type="ECO:0000255" key="1">
    <source>
        <dbReference type="HAMAP-Rule" id="MF_01448"/>
    </source>
</evidence>
<protein>
    <recommendedName>
        <fullName evidence="1">UPF0473 protein SPJ_0208</fullName>
    </recommendedName>
</protein>
<gene>
    <name type="ordered locus">SPJ_0208</name>
</gene>